<sequence>MTARPLSELVERGWAAALEPVADQVAHMGQFLRAEIAAGRRYLPAGSNVLRAFTFPFDNVRVLIVGQDPYPTPGHAVGLSFSVAPDVRPWPRSLANIFDEYTADLGYPLPSNGDLTPWAQRGVLLLNRVLTVRPSNPASHRGKGWEAVTECAIRALAARAAPLVAILWGRDASTLKPMLAAGNCVAIESPHPSPLSASRGFFGSRPFSRANELLVGMGAEPIDWRLP</sequence>
<gene>
    <name type="primary">ung</name>
    <name type="ordered locus">Rv2976c</name>
    <name type="ORF">MTCY349.11</name>
</gene>
<comment type="function">
    <text evidence="1">Excises uracil residues from the DNA which can arise as a result of misincorporation of dUMP residues by DNA polymerase or due to deamination of cytosine.</text>
</comment>
<comment type="catalytic activity">
    <reaction>
        <text>Hydrolyzes single-stranded DNA or mismatched double-stranded DNA and polynucleotides, releasing free uracil.</text>
        <dbReference type="EC" id="3.2.2.27"/>
    </reaction>
</comment>
<comment type="subcellular location">
    <subcellularLocation>
        <location evidence="1">Cytoplasm</location>
    </subcellularLocation>
</comment>
<comment type="similarity">
    <text evidence="2">Belongs to the uracil-DNA glycosylase (UDG) superfamily. UNG family.</text>
</comment>
<name>UNG_MYCTU</name>
<evidence type="ECO:0000250" key="1"/>
<evidence type="ECO:0000305" key="2"/>
<evidence type="ECO:0007829" key="3">
    <source>
        <dbReference type="PDB" id="4WPK"/>
    </source>
</evidence>
<evidence type="ECO:0007829" key="4">
    <source>
        <dbReference type="PDB" id="4WRX"/>
    </source>
</evidence>
<evidence type="ECO:0007829" key="5">
    <source>
        <dbReference type="PDB" id="8I6D"/>
    </source>
</evidence>
<proteinExistence type="evidence at protein level"/>
<dbReference type="EC" id="3.2.2.27"/>
<dbReference type="EMBL" id="AL123456">
    <property type="protein sequence ID" value="CCP45781.1"/>
    <property type="molecule type" value="Genomic_DNA"/>
</dbReference>
<dbReference type="PIR" id="E70672">
    <property type="entry name" value="E70672"/>
</dbReference>
<dbReference type="RefSeq" id="NP_217492.1">
    <property type="nucleotide sequence ID" value="NC_000962.3"/>
</dbReference>
<dbReference type="RefSeq" id="WP_003899565.1">
    <property type="nucleotide sequence ID" value="NZ_NVQJ01000015.1"/>
</dbReference>
<dbReference type="PDB" id="2ZHX">
    <property type="method" value="X-ray"/>
    <property type="resolution" value="3.10 A"/>
    <property type="chains" value="A/C/E/G/I/K/M=1-227"/>
</dbReference>
<dbReference type="PDB" id="3A7N">
    <property type="method" value="X-ray"/>
    <property type="resolution" value="1.95 A"/>
    <property type="chains" value="A=1-227"/>
</dbReference>
<dbReference type="PDB" id="4WPK">
    <property type="method" value="X-ray"/>
    <property type="resolution" value="0.98 A"/>
    <property type="chains" value="A=1-227"/>
</dbReference>
<dbReference type="PDB" id="4WPL">
    <property type="method" value="X-ray"/>
    <property type="resolution" value="1.15 A"/>
    <property type="chains" value="A=1-227"/>
</dbReference>
<dbReference type="PDB" id="4WRU">
    <property type="method" value="X-ray"/>
    <property type="resolution" value="1.24 A"/>
    <property type="chains" value="A=1-227"/>
</dbReference>
<dbReference type="PDB" id="4WRV">
    <property type="method" value="X-ray"/>
    <property type="resolution" value="1.44 A"/>
    <property type="chains" value="A=1-227"/>
</dbReference>
<dbReference type="PDB" id="4WRW">
    <property type="method" value="X-ray"/>
    <property type="resolution" value="1.90 A"/>
    <property type="chains" value="A=1-227"/>
</dbReference>
<dbReference type="PDB" id="4WRX">
    <property type="method" value="X-ray"/>
    <property type="resolution" value="1.40 A"/>
    <property type="chains" value="A=1-227"/>
</dbReference>
<dbReference type="PDB" id="4WRY">
    <property type="method" value="X-ray"/>
    <property type="resolution" value="1.43 A"/>
    <property type="chains" value="A=1-227"/>
</dbReference>
<dbReference type="PDB" id="4WRZ">
    <property type="method" value="X-ray"/>
    <property type="resolution" value="1.19 A"/>
    <property type="chains" value="A=1-227"/>
</dbReference>
<dbReference type="PDB" id="4WS0">
    <property type="method" value="X-ray"/>
    <property type="resolution" value="1.97 A"/>
    <property type="chains" value="A=1-227"/>
</dbReference>
<dbReference type="PDB" id="4WS1">
    <property type="method" value="X-ray"/>
    <property type="resolution" value="1.40 A"/>
    <property type="chains" value="A=1-227"/>
</dbReference>
<dbReference type="PDB" id="4WS2">
    <property type="method" value="X-ray"/>
    <property type="resolution" value="1.13 A"/>
    <property type="chains" value="A=1-227"/>
</dbReference>
<dbReference type="PDB" id="4WS3">
    <property type="method" value="X-ray"/>
    <property type="resolution" value="1.40 A"/>
    <property type="chains" value="A=1-227"/>
</dbReference>
<dbReference type="PDB" id="4WS4">
    <property type="method" value="X-ray"/>
    <property type="resolution" value="1.18 A"/>
    <property type="chains" value="A=1-227"/>
</dbReference>
<dbReference type="PDB" id="4WS5">
    <property type="method" value="X-ray"/>
    <property type="resolution" value="1.40 A"/>
    <property type="chains" value="A=1-227"/>
</dbReference>
<dbReference type="PDB" id="4WS6">
    <property type="method" value="X-ray"/>
    <property type="resolution" value="1.10 A"/>
    <property type="chains" value="A=1-227"/>
</dbReference>
<dbReference type="PDB" id="4WS7">
    <property type="method" value="X-ray"/>
    <property type="resolution" value="1.88 A"/>
    <property type="chains" value="A=1-227"/>
</dbReference>
<dbReference type="PDB" id="4WS8">
    <property type="method" value="X-ray"/>
    <property type="resolution" value="1.40 A"/>
    <property type="chains" value="A=1-227"/>
</dbReference>
<dbReference type="PDB" id="8I61">
    <property type="method" value="X-ray"/>
    <property type="resolution" value="1.24 A"/>
    <property type="chains" value="A=1-227"/>
</dbReference>
<dbReference type="PDB" id="8I62">
    <property type="method" value="X-ray"/>
    <property type="resolution" value="1.26 A"/>
    <property type="chains" value="A=1-227"/>
</dbReference>
<dbReference type="PDB" id="8I63">
    <property type="method" value="X-ray"/>
    <property type="resolution" value="1.95 A"/>
    <property type="chains" value="A=1-227"/>
</dbReference>
<dbReference type="PDB" id="8I64">
    <property type="method" value="X-ray"/>
    <property type="resolution" value="2.26 A"/>
    <property type="chains" value="A=1-227"/>
</dbReference>
<dbReference type="PDB" id="8I65">
    <property type="method" value="X-ray"/>
    <property type="resolution" value="1.72 A"/>
    <property type="chains" value="A=1-227"/>
</dbReference>
<dbReference type="PDB" id="8I66">
    <property type="method" value="X-ray"/>
    <property type="resolution" value="2.60 A"/>
    <property type="chains" value="A=1-227"/>
</dbReference>
<dbReference type="PDB" id="8I67">
    <property type="method" value="X-ray"/>
    <property type="resolution" value="1.72 A"/>
    <property type="chains" value="A=1-227"/>
</dbReference>
<dbReference type="PDB" id="8I68">
    <property type="method" value="X-ray"/>
    <property type="resolution" value="1.88 A"/>
    <property type="chains" value="A=1-227"/>
</dbReference>
<dbReference type="PDB" id="8I69">
    <property type="method" value="X-ray"/>
    <property type="resolution" value="2.00 A"/>
    <property type="chains" value="A=1-227"/>
</dbReference>
<dbReference type="PDB" id="8I6A">
    <property type="method" value="X-ray"/>
    <property type="resolution" value="2.00 A"/>
    <property type="chains" value="A=1-227"/>
</dbReference>
<dbReference type="PDB" id="8I6B">
    <property type="method" value="X-ray"/>
    <property type="resolution" value="1.60 A"/>
    <property type="chains" value="A=1-227"/>
</dbReference>
<dbReference type="PDB" id="8I6C">
    <property type="method" value="X-ray"/>
    <property type="resolution" value="2.28 A"/>
    <property type="chains" value="A=1-227"/>
</dbReference>
<dbReference type="PDB" id="8I6D">
    <property type="method" value="X-ray"/>
    <property type="resolution" value="2.40 A"/>
    <property type="chains" value="A/B=1-227"/>
</dbReference>
<dbReference type="PDBsum" id="2ZHX"/>
<dbReference type="PDBsum" id="3A7N"/>
<dbReference type="PDBsum" id="4WPK"/>
<dbReference type="PDBsum" id="4WPL"/>
<dbReference type="PDBsum" id="4WRU"/>
<dbReference type="PDBsum" id="4WRV"/>
<dbReference type="PDBsum" id="4WRW"/>
<dbReference type="PDBsum" id="4WRX"/>
<dbReference type="PDBsum" id="4WRY"/>
<dbReference type="PDBsum" id="4WRZ"/>
<dbReference type="PDBsum" id="4WS0"/>
<dbReference type="PDBsum" id="4WS1"/>
<dbReference type="PDBsum" id="4WS2"/>
<dbReference type="PDBsum" id="4WS3"/>
<dbReference type="PDBsum" id="4WS4"/>
<dbReference type="PDBsum" id="4WS5"/>
<dbReference type="PDBsum" id="4WS6"/>
<dbReference type="PDBsum" id="4WS7"/>
<dbReference type="PDBsum" id="4WS8"/>
<dbReference type="PDBsum" id="8I61"/>
<dbReference type="PDBsum" id="8I62"/>
<dbReference type="PDBsum" id="8I63"/>
<dbReference type="PDBsum" id="8I64"/>
<dbReference type="PDBsum" id="8I65"/>
<dbReference type="PDBsum" id="8I66"/>
<dbReference type="PDBsum" id="8I67"/>
<dbReference type="PDBsum" id="8I68"/>
<dbReference type="PDBsum" id="8I69"/>
<dbReference type="PDBsum" id="8I6A"/>
<dbReference type="PDBsum" id="8I6B"/>
<dbReference type="PDBsum" id="8I6C"/>
<dbReference type="PDBsum" id="8I6D"/>
<dbReference type="SMR" id="P9WFQ9"/>
<dbReference type="FunCoup" id="P9WFQ9">
    <property type="interactions" value="202"/>
</dbReference>
<dbReference type="STRING" id="83332.Rv2976c"/>
<dbReference type="PaxDb" id="83332-Rv2976c"/>
<dbReference type="DNASU" id="887410"/>
<dbReference type="GeneID" id="887410"/>
<dbReference type="KEGG" id="mtu:Rv2976c"/>
<dbReference type="KEGG" id="mtv:RVBD_2976c"/>
<dbReference type="TubercuList" id="Rv2976c"/>
<dbReference type="eggNOG" id="COG0692">
    <property type="taxonomic scope" value="Bacteria"/>
</dbReference>
<dbReference type="InParanoid" id="P9WFQ9"/>
<dbReference type="OrthoDB" id="9804372at2"/>
<dbReference type="PhylomeDB" id="P9WFQ9"/>
<dbReference type="EvolutionaryTrace" id="P9WFQ9"/>
<dbReference type="Proteomes" id="UP000001584">
    <property type="component" value="Chromosome"/>
</dbReference>
<dbReference type="GO" id="GO:0005737">
    <property type="term" value="C:cytoplasm"/>
    <property type="evidence" value="ECO:0007669"/>
    <property type="project" value="UniProtKB-SubCell"/>
</dbReference>
<dbReference type="GO" id="GO:0004844">
    <property type="term" value="F:uracil DNA N-glycosylase activity"/>
    <property type="evidence" value="ECO:0000314"/>
    <property type="project" value="MTBBASE"/>
</dbReference>
<dbReference type="GO" id="GO:0006284">
    <property type="term" value="P:base-excision repair"/>
    <property type="evidence" value="ECO:0000314"/>
    <property type="project" value="MTBBASE"/>
</dbReference>
<dbReference type="GO" id="GO:0097510">
    <property type="term" value="P:base-excision repair, AP site formation via deaminated base removal"/>
    <property type="evidence" value="ECO:0000318"/>
    <property type="project" value="GO_Central"/>
</dbReference>
<dbReference type="CDD" id="cd10027">
    <property type="entry name" value="UDG-F1-like"/>
    <property type="match status" value="1"/>
</dbReference>
<dbReference type="FunFam" id="3.40.470.10:FF:000006">
    <property type="entry name" value="Uracil-DNA glycosylase"/>
    <property type="match status" value="1"/>
</dbReference>
<dbReference type="Gene3D" id="3.40.470.10">
    <property type="entry name" value="Uracil-DNA glycosylase-like domain"/>
    <property type="match status" value="1"/>
</dbReference>
<dbReference type="HAMAP" id="MF_00148">
    <property type="entry name" value="UDG"/>
    <property type="match status" value="1"/>
</dbReference>
<dbReference type="InterPro" id="IPR002043">
    <property type="entry name" value="UDG_fam1"/>
</dbReference>
<dbReference type="InterPro" id="IPR018085">
    <property type="entry name" value="Ura-DNA_Glyclase_AS"/>
</dbReference>
<dbReference type="InterPro" id="IPR005122">
    <property type="entry name" value="Uracil-DNA_glycosylase-like"/>
</dbReference>
<dbReference type="InterPro" id="IPR036895">
    <property type="entry name" value="Uracil-DNA_glycosylase-like_sf"/>
</dbReference>
<dbReference type="NCBIfam" id="NF003588">
    <property type="entry name" value="PRK05254.1-1"/>
    <property type="match status" value="1"/>
</dbReference>
<dbReference type="NCBIfam" id="NF003592">
    <property type="entry name" value="PRK05254.1-5"/>
    <property type="match status" value="1"/>
</dbReference>
<dbReference type="NCBIfam" id="TIGR00628">
    <property type="entry name" value="ung"/>
    <property type="match status" value="1"/>
</dbReference>
<dbReference type="PANTHER" id="PTHR11264">
    <property type="entry name" value="URACIL-DNA GLYCOSYLASE"/>
    <property type="match status" value="1"/>
</dbReference>
<dbReference type="PANTHER" id="PTHR11264:SF0">
    <property type="entry name" value="URACIL-DNA GLYCOSYLASE"/>
    <property type="match status" value="1"/>
</dbReference>
<dbReference type="Pfam" id="PF03167">
    <property type="entry name" value="UDG"/>
    <property type="match status" value="1"/>
</dbReference>
<dbReference type="SMART" id="SM00986">
    <property type="entry name" value="UDG"/>
    <property type="match status" value="1"/>
</dbReference>
<dbReference type="SMART" id="SM00987">
    <property type="entry name" value="UreE_C"/>
    <property type="match status" value="1"/>
</dbReference>
<dbReference type="SUPFAM" id="SSF52141">
    <property type="entry name" value="Uracil-DNA glycosylase-like"/>
    <property type="match status" value="1"/>
</dbReference>
<dbReference type="PROSITE" id="PS00130">
    <property type="entry name" value="U_DNA_GLYCOSYLASE"/>
    <property type="match status" value="1"/>
</dbReference>
<organism>
    <name type="scientific">Mycobacterium tuberculosis (strain ATCC 25618 / H37Rv)</name>
    <dbReference type="NCBI Taxonomy" id="83332"/>
    <lineage>
        <taxon>Bacteria</taxon>
        <taxon>Bacillati</taxon>
        <taxon>Actinomycetota</taxon>
        <taxon>Actinomycetes</taxon>
        <taxon>Mycobacteriales</taxon>
        <taxon>Mycobacteriaceae</taxon>
        <taxon>Mycobacterium</taxon>
        <taxon>Mycobacterium tuberculosis complex</taxon>
    </lineage>
</organism>
<protein>
    <recommendedName>
        <fullName>Uracil-DNA glycosylase</fullName>
        <shortName>UDG</shortName>
        <ecNumber>3.2.2.27</ecNumber>
    </recommendedName>
</protein>
<feature type="chain" id="PRO_0000176119" description="Uracil-DNA glycosylase">
    <location>
        <begin position="1"/>
        <end position="227"/>
    </location>
</feature>
<feature type="active site" description="Proton acceptor" evidence="1">
    <location>
        <position position="68"/>
    </location>
</feature>
<feature type="turn" evidence="3">
    <location>
        <begin position="1"/>
        <end position="3"/>
    </location>
</feature>
<feature type="helix" evidence="3">
    <location>
        <begin position="6"/>
        <end position="9"/>
    </location>
</feature>
<feature type="helix" evidence="3">
    <location>
        <begin position="12"/>
        <end position="17"/>
    </location>
</feature>
<feature type="helix" evidence="3">
    <location>
        <begin position="19"/>
        <end position="21"/>
    </location>
</feature>
<feature type="helix" evidence="3">
    <location>
        <begin position="22"/>
        <end position="38"/>
    </location>
</feature>
<feature type="helix" evidence="3">
    <location>
        <begin position="46"/>
        <end position="48"/>
    </location>
</feature>
<feature type="helix" evidence="3">
    <location>
        <begin position="51"/>
        <end position="54"/>
    </location>
</feature>
<feature type="helix" evidence="3">
    <location>
        <begin position="57"/>
        <end position="59"/>
    </location>
</feature>
<feature type="strand" evidence="3">
    <location>
        <begin position="61"/>
        <end position="68"/>
    </location>
</feature>
<feature type="turn" evidence="3">
    <location>
        <begin position="73"/>
        <end position="75"/>
    </location>
</feature>
<feature type="strand" evidence="5">
    <location>
        <begin position="78"/>
        <end position="81"/>
    </location>
</feature>
<feature type="helix" evidence="3">
    <location>
        <begin position="92"/>
        <end position="105"/>
    </location>
</feature>
<feature type="strand" evidence="3">
    <location>
        <begin position="111"/>
        <end position="113"/>
    </location>
</feature>
<feature type="helix" evidence="3">
    <location>
        <begin position="116"/>
        <end position="119"/>
    </location>
</feature>
<feature type="turn" evidence="3">
    <location>
        <begin position="120"/>
        <end position="122"/>
    </location>
</feature>
<feature type="strand" evidence="3">
    <location>
        <begin position="123"/>
        <end position="129"/>
    </location>
</feature>
<feature type="turn" evidence="3">
    <location>
        <begin position="137"/>
        <end position="142"/>
    </location>
</feature>
<feature type="helix" evidence="3">
    <location>
        <begin position="145"/>
        <end position="158"/>
    </location>
</feature>
<feature type="strand" evidence="3">
    <location>
        <begin position="159"/>
        <end position="161"/>
    </location>
</feature>
<feature type="strand" evidence="3">
    <location>
        <begin position="163"/>
        <end position="169"/>
    </location>
</feature>
<feature type="helix" evidence="3">
    <location>
        <begin position="170"/>
        <end position="173"/>
    </location>
</feature>
<feature type="helix" evidence="3">
    <location>
        <begin position="174"/>
        <end position="179"/>
    </location>
</feature>
<feature type="turn" evidence="4">
    <location>
        <begin position="181"/>
        <end position="183"/>
    </location>
</feature>
<feature type="strand" evidence="3">
    <location>
        <begin position="184"/>
        <end position="189"/>
    </location>
</feature>
<feature type="turn" evidence="3">
    <location>
        <begin position="194"/>
        <end position="203"/>
    </location>
</feature>
<feature type="helix" evidence="3">
    <location>
        <begin position="206"/>
        <end position="216"/>
    </location>
</feature>
<accession>P9WFQ9</accession>
<accession>L0TBF3</accession>
<accession>P67071</accession>
<accession>P95119</accession>
<keyword id="KW-0002">3D-structure</keyword>
<keyword id="KW-0963">Cytoplasm</keyword>
<keyword id="KW-0227">DNA damage</keyword>
<keyword id="KW-0234">DNA repair</keyword>
<keyword id="KW-0378">Hydrolase</keyword>
<keyword id="KW-1185">Reference proteome</keyword>
<reference key="1">
    <citation type="journal article" date="1998" name="Nature">
        <title>Deciphering the biology of Mycobacterium tuberculosis from the complete genome sequence.</title>
        <authorList>
            <person name="Cole S.T."/>
            <person name="Brosch R."/>
            <person name="Parkhill J."/>
            <person name="Garnier T."/>
            <person name="Churcher C.M."/>
            <person name="Harris D.E."/>
            <person name="Gordon S.V."/>
            <person name="Eiglmeier K."/>
            <person name="Gas S."/>
            <person name="Barry C.E. III"/>
            <person name="Tekaia F."/>
            <person name="Badcock K."/>
            <person name="Basham D."/>
            <person name="Brown D."/>
            <person name="Chillingworth T."/>
            <person name="Connor R."/>
            <person name="Davies R.M."/>
            <person name="Devlin K."/>
            <person name="Feltwell T."/>
            <person name="Gentles S."/>
            <person name="Hamlin N."/>
            <person name="Holroyd S."/>
            <person name="Hornsby T."/>
            <person name="Jagels K."/>
            <person name="Krogh A."/>
            <person name="McLean J."/>
            <person name="Moule S."/>
            <person name="Murphy L.D."/>
            <person name="Oliver S."/>
            <person name="Osborne J."/>
            <person name="Quail M.A."/>
            <person name="Rajandream M.A."/>
            <person name="Rogers J."/>
            <person name="Rutter S."/>
            <person name="Seeger K."/>
            <person name="Skelton S."/>
            <person name="Squares S."/>
            <person name="Squares R."/>
            <person name="Sulston J.E."/>
            <person name="Taylor K."/>
            <person name="Whitehead S."/>
            <person name="Barrell B.G."/>
        </authorList>
    </citation>
    <scope>NUCLEOTIDE SEQUENCE [LARGE SCALE GENOMIC DNA]</scope>
    <source>
        <strain>ATCC 25618 / H37Rv</strain>
    </source>
</reference>
<reference key="2">
    <citation type="journal article" date="2011" name="Mol. Cell. Proteomics">
        <title>Proteogenomic analysis of Mycobacterium tuberculosis by high resolution mass spectrometry.</title>
        <authorList>
            <person name="Kelkar D.S."/>
            <person name="Kumar D."/>
            <person name="Kumar P."/>
            <person name="Balakrishnan L."/>
            <person name="Muthusamy B."/>
            <person name="Yadav A.K."/>
            <person name="Shrivastava P."/>
            <person name="Marimuthu A."/>
            <person name="Anand S."/>
            <person name="Sundaram H."/>
            <person name="Kingsbury R."/>
            <person name="Harsha H.C."/>
            <person name="Nair B."/>
            <person name="Prasad T.S."/>
            <person name="Chauhan D.S."/>
            <person name="Katoch K."/>
            <person name="Katoch V.M."/>
            <person name="Kumar P."/>
            <person name="Chaerkady R."/>
            <person name="Ramachandran S."/>
            <person name="Dash D."/>
            <person name="Pandey A."/>
        </authorList>
    </citation>
    <scope>IDENTIFICATION BY MASS SPECTROMETRY [LARGE SCALE ANALYSIS]</scope>
    <source>
        <strain>ATCC 25618 / H37Rv</strain>
    </source>
</reference>